<accession>Q9C616</accession>
<feature type="chain" id="PRO_0000408381" description="Probable transcription factor KAN2">
    <location>
        <begin position="1"/>
        <end position="388"/>
    </location>
</feature>
<feature type="domain" description="HTH myb-type">
    <location>
        <begin position="210"/>
        <end position="270"/>
    </location>
</feature>
<feature type="DNA-binding region" description="H-T-H motif" evidence="1">
    <location>
        <begin position="241"/>
        <end position="266"/>
    </location>
</feature>
<feature type="region of interest" description="Disordered" evidence="2">
    <location>
        <begin position="1"/>
        <end position="38"/>
    </location>
</feature>
<feature type="region of interest" description="Disordered" evidence="2">
    <location>
        <begin position="271"/>
        <end position="326"/>
    </location>
</feature>
<feature type="region of interest" description="Disordered" evidence="2">
    <location>
        <begin position="359"/>
        <end position="388"/>
    </location>
</feature>
<feature type="compositionally biased region" description="Polar residues" evidence="2">
    <location>
        <begin position="10"/>
        <end position="25"/>
    </location>
</feature>
<feature type="compositionally biased region" description="Polar residues" evidence="2">
    <location>
        <begin position="277"/>
        <end position="292"/>
    </location>
</feature>
<feature type="compositionally biased region" description="Low complexity" evidence="2">
    <location>
        <begin position="359"/>
        <end position="374"/>
    </location>
</feature>
<comment type="function">
    <text evidence="3 5 6 7">Probable transcription factor that regulates lateral organ polarity. Promotes abaxial cell fate during lateral organd formation. Functions with KAN1 in the specification of polarity of the ovule outer integument.</text>
</comment>
<comment type="subcellular location">
    <subcellularLocation>
        <location evidence="8">Nucleus</location>
    </subcellularLocation>
</comment>
<comment type="tissue specificity">
    <text evidence="4">Expressed in developing phloem.</text>
</comment>
<comment type="miscellaneous">
    <text>Plants overexpressing KAN2 develop elongated and pointed cotyledons, and do not produced subsequent leaves, resulting in seedling lethality.</text>
</comment>
<dbReference type="EMBL" id="AY048689">
    <property type="protein sequence ID" value="AAL05437.1"/>
    <property type="molecule type" value="mRNA"/>
</dbReference>
<dbReference type="EMBL" id="AC084110">
    <property type="protein sequence ID" value="AAG60180.1"/>
    <property type="molecule type" value="Genomic_DNA"/>
</dbReference>
<dbReference type="EMBL" id="CP002684">
    <property type="protein sequence ID" value="AEE31455.1"/>
    <property type="molecule type" value="Genomic_DNA"/>
</dbReference>
<dbReference type="EMBL" id="BT029211">
    <property type="protein sequence ID" value="ABJ17146.1"/>
    <property type="molecule type" value="mRNA"/>
</dbReference>
<dbReference type="EMBL" id="AB493491">
    <property type="protein sequence ID" value="BAH30329.1"/>
    <property type="molecule type" value="mRNA"/>
</dbReference>
<dbReference type="RefSeq" id="NP_564392.1">
    <property type="nucleotide sequence ID" value="NM_102957.4"/>
</dbReference>
<dbReference type="SMR" id="Q9C616"/>
<dbReference type="BioGRID" id="25350">
    <property type="interactions" value="3"/>
</dbReference>
<dbReference type="FunCoup" id="Q9C616">
    <property type="interactions" value="321"/>
</dbReference>
<dbReference type="IntAct" id="Q9C616">
    <property type="interactions" value="22"/>
</dbReference>
<dbReference type="STRING" id="3702.Q9C616"/>
<dbReference type="PaxDb" id="3702-AT1G32240.1"/>
<dbReference type="EnsemblPlants" id="AT1G32240.1">
    <property type="protein sequence ID" value="AT1G32240.1"/>
    <property type="gene ID" value="AT1G32240"/>
</dbReference>
<dbReference type="GeneID" id="840116"/>
<dbReference type="Gramene" id="AT1G32240.1">
    <property type="protein sequence ID" value="AT1G32240.1"/>
    <property type="gene ID" value="AT1G32240"/>
</dbReference>
<dbReference type="KEGG" id="ath:AT1G32240"/>
<dbReference type="Araport" id="AT1G32240"/>
<dbReference type="TAIR" id="AT1G32240">
    <property type="gene designation" value="KAN2"/>
</dbReference>
<dbReference type="eggNOG" id="ENOG502QRMZ">
    <property type="taxonomic scope" value="Eukaryota"/>
</dbReference>
<dbReference type="HOGENOM" id="CLU_047766_5_0_1"/>
<dbReference type="InParanoid" id="Q9C616"/>
<dbReference type="OMA" id="QGSSMCA"/>
<dbReference type="PhylomeDB" id="Q9C616"/>
<dbReference type="PRO" id="PR:Q9C616"/>
<dbReference type="Proteomes" id="UP000006548">
    <property type="component" value="Chromosome 1"/>
</dbReference>
<dbReference type="ExpressionAtlas" id="Q9C616">
    <property type="expression patterns" value="baseline and differential"/>
</dbReference>
<dbReference type="GO" id="GO:0005634">
    <property type="term" value="C:nucleus"/>
    <property type="evidence" value="ECO:0007669"/>
    <property type="project" value="UniProtKB-SubCell"/>
</dbReference>
<dbReference type="GO" id="GO:0003700">
    <property type="term" value="F:DNA-binding transcription factor activity"/>
    <property type="evidence" value="ECO:0000250"/>
    <property type="project" value="TAIR"/>
</dbReference>
<dbReference type="GO" id="GO:0000976">
    <property type="term" value="F:transcription cis-regulatory region binding"/>
    <property type="evidence" value="ECO:0007669"/>
    <property type="project" value="InterPro"/>
</dbReference>
<dbReference type="GO" id="GO:0010158">
    <property type="term" value="P:abaxial cell fate specification"/>
    <property type="evidence" value="ECO:0007669"/>
    <property type="project" value="InterPro"/>
</dbReference>
<dbReference type="GO" id="GO:0048440">
    <property type="term" value="P:carpel development"/>
    <property type="evidence" value="ECO:0000316"/>
    <property type="project" value="TAIR"/>
</dbReference>
<dbReference type="GO" id="GO:0048481">
    <property type="term" value="P:plant ovule development"/>
    <property type="evidence" value="ECO:0000316"/>
    <property type="project" value="TAIR"/>
</dbReference>
<dbReference type="GO" id="GO:0009944">
    <property type="term" value="P:polarity specification of adaxial/abaxial axis"/>
    <property type="evidence" value="ECO:0000316"/>
    <property type="project" value="TAIR"/>
</dbReference>
<dbReference type="GO" id="GO:0006355">
    <property type="term" value="P:regulation of DNA-templated transcription"/>
    <property type="evidence" value="ECO:0000304"/>
    <property type="project" value="TAIR"/>
</dbReference>
<dbReference type="FunFam" id="1.10.10.60:FF:000002">
    <property type="entry name" value="Myb family transcription factor"/>
    <property type="match status" value="1"/>
</dbReference>
<dbReference type="Gene3D" id="1.10.10.60">
    <property type="entry name" value="Homeodomain-like"/>
    <property type="match status" value="1"/>
</dbReference>
<dbReference type="InterPro" id="IPR009057">
    <property type="entry name" value="Homeodomain-like_sf"/>
</dbReference>
<dbReference type="InterPro" id="IPR044847">
    <property type="entry name" value="KAN_fam"/>
</dbReference>
<dbReference type="InterPro" id="IPR006447">
    <property type="entry name" value="Myb_dom_plants"/>
</dbReference>
<dbReference type="InterPro" id="IPR001005">
    <property type="entry name" value="SANT/Myb"/>
</dbReference>
<dbReference type="NCBIfam" id="TIGR01557">
    <property type="entry name" value="myb_SHAQKYF"/>
    <property type="match status" value="1"/>
</dbReference>
<dbReference type="PANTHER" id="PTHR31496">
    <property type="entry name" value="TRANSCRIPTION FACTOR KAN2-RELATED"/>
    <property type="match status" value="1"/>
</dbReference>
<dbReference type="PANTHER" id="PTHR31496:SF48">
    <property type="entry name" value="TRANSCRIPTION FACTOR KAN2-RELATED"/>
    <property type="match status" value="1"/>
</dbReference>
<dbReference type="Pfam" id="PF00249">
    <property type="entry name" value="Myb_DNA-binding"/>
    <property type="match status" value="1"/>
</dbReference>
<dbReference type="SUPFAM" id="SSF46689">
    <property type="entry name" value="Homeodomain-like"/>
    <property type="match status" value="1"/>
</dbReference>
<keyword id="KW-0217">Developmental protein</keyword>
<keyword id="KW-0221">Differentiation</keyword>
<keyword id="KW-0539">Nucleus</keyword>
<keyword id="KW-1185">Reference proteome</keyword>
<keyword id="KW-0804">Transcription</keyword>
<keyword id="KW-0805">Transcription regulation</keyword>
<gene>
    <name type="primary">KAN2</name>
    <name type="ordered locus">At1g32240</name>
    <name type="ORF">F27G20.7</name>
</gene>
<reference key="1">
    <citation type="journal article" date="2001" name="Curr. Biol.">
        <title>Establishment of polarity in lateral organs of plants.</title>
        <authorList>
            <person name="Eshed Y."/>
            <person name="Baum S.F."/>
            <person name="Perea J.V."/>
            <person name="Bowman J.L."/>
        </authorList>
    </citation>
    <scope>NUCLEOTIDE SEQUENCE [MRNA]</scope>
    <scope>FUNCTION</scope>
    <source>
        <strain>cv. Columbia</strain>
    </source>
</reference>
<reference key="2">
    <citation type="journal article" date="2000" name="Nature">
        <title>Sequence and analysis of chromosome 1 of the plant Arabidopsis thaliana.</title>
        <authorList>
            <person name="Theologis A."/>
            <person name="Ecker J.R."/>
            <person name="Palm C.J."/>
            <person name="Federspiel N.A."/>
            <person name="Kaul S."/>
            <person name="White O."/>
            <person name="Alonso J."/>
            <person name="Altafi H."/>
            <person name="Araujo R."/>
            <person name="Bowman C.L."/>
            <person name="Brooks S.Y."/>
            <person name="Buehler E."/>
            <person name="Chan A."/>
            <person name="Chao Q."/>
            <person name="Chen H."/>
            <person name="Cheuk R.F."/>
            <person name="Chin C.W."/>
            <person name="Chung M.K."/>
            <person name="Conn L."/>
            <person name="Conway A.B."/>
            <person name="Conway A.R."/>
            <person name="Creasy T.H."/>
            <person name="Dewar K."/>
            <person name="Dunn P."/>
            <person name="Etgu P."/>
            <person name="Feldblyum T.V."/>
            <person name="Feng J.-D."/>
            <person name="Fong B."/>
            <person name="Fujii C.Y."/>
            <person name="Gill J.E."/>
            <person name="Goldsmith A.D."/>
            <person name="Haas B."/>
            <person name="Hansen N.F."/>
            <person name="Hughes B."/>
            <person name="Huizar L."/>
            <person name="Hunter J.L."/>
            <person name="Jenkins J."/>
            <person name="Johnson-Hopson C."/>
            <person name="Khan S."/>
            <person name="Khaykin E."/>
            <person name="Kim C.J."/>
            <person name="Koo H.L."/>
            <person name="Kremenetskaia I."/>
            <person name="Kurtz D.B."/>
            <person name="Kwan A."/>
            <person name="Lam B."/>
            <person name="Langin-Hooper S."/>
            <person name="Lee A."/>
            <person name="Lee J.M."/>
            <person name="Lenz C.A."/>
            <person name="Li J.H."/>
            <person name="Li Y.-P."/>
            <person name="Lin X."/>
            <person name="Liu S.X."/>
            <person name="Liu Z.A."/>
            <person name="Luros J.S."/>
            <person name="Maiti R."/>
            <person name="Marziali A."/>
            <person name="Militscher J."/>
            <person name="Miranda M."/>
            <person name="Nguyen M."/>
            <person name="Nierman W.C."/>
            <person name="Osborne B.I."/>
            <person name="Pai G."/>
            <person name="Peterson J."/>
            <person name="Pham P.K."/>
            <person name="Rizzo M."/>
            <person name="Rooney T."/>
            <person name="Rowley D."/>
            <person name="Sakano H."/>
            <person name="Salzberg S.L."/>
            <person name="Schwartz J.R."/>
            <person name="Shinn P."/>
            <person name="Southwick A.M."/>
            <person name="Sun H."/>
            <person name="Tallon L.J."/>
            <person name="Tambunga G."/>
            <person name="Toriumi M.J."/>
            <person name="Town C.D."/>
            <person name="Utterback T."/>
            <person name="Van Aken S."/>
            <person name="Vaysberg M."/>
            <person name="Vysotskaia V.S."/>
            <person name="Walker M."/>
            <person name="Wu D."/>
            <person name="Yu G."/>
            <person name="Fraser C.M."/>
            <person name="Venter J.C."/>
            <person name="Davis R.W."/>
        </authorList>
    </citation>
    <scope>NUCLEOTIDE SEQUENCE [LARGE SCALE GENOMIC DNA]</scope>
    <source>
        <strain>cv. Columbia</strain>
    </source>
</reference>
<reference key="3">
    <citation type="journal article" date="2017" name="Plant J.">
        <title>Araport11: a complete reannotation of the Arabidopsis thaliana reference genome.</title>
        <authorList>
            <person name="Cheng C.Y."/>
            <person name="Krishnakumar V."/>
            <person name="Chan A.P."/>
            <person name="Thibaud-Nissen F."/>
            <person name="Schobel S."/>
            <person name="Town C.D."/>
        </authorList>
    </citation>
    <scope>GENOME REANNOTATION</scope>
    <source>
        <strain>cv. Columbia</strain>
    </source>
</reference>
<reference key="4">
    <citation type="submission" date="2006-10" db="EMBL/GenBank/DDBJ databases">
        <title>Arabidopsis ORF Clones.</title>
        <authorList>
            <person name="Quinitio C."/>
            <person name="Chen H."/>
            <person name="Kim C.J."/>
            <person name="Shinn P."/>
            <person name="Ecker J.R."/>
        </authorList>
    </citation>
    <scope>NUCLEOTIDE SEQUENCE [LARGE SCALE MRNA]</scope>
    <source>
        <strain>cv. Columbia</strain>
    </source>
</reference>
<reference key="5">
    <citation type="submission" date="2009-03" db="EMBL/GenBank/DDBJ databases">
        <title>ORF cloning and analysis of Arabidopsis transcription factor genes.</title>
        <authorList>
            <person name="Fujita M."/>
            <person name="Mizukado S."/>
            <person name="Seki M."/>
            <person name="Shinozaki K."/>
            <person name="Mitsuda N."/>
            <person name="Takiguchi Y."/>
            <person name="Takagi M."/>
        </authorList>
    </citation>
    <scope>NUCLEOTIDE SEQUENCE [LARGE SCALE MRNA]</scope>
</reference>
<reference key="6">
    <citation type="journal article" date="2003" name="Curr. Biol.">
        <title>Radial patterning of Arabidopsis shoots by class III HD-ZIP and KANADI genes.</title>
        <authorList>
            <person name="Emery J.F."/>
            <person name="Floyd S.K."/>
            <person name="Alvarez J."/>
            <person name="Eshed Y."/>
            <person name="Hawker N.P."/>
            <person name="Izhaki A."/>
            <person name="Baum S.F."/>
            <person name="Bowman J.L."/>
        </authorList>
    </citation>
    <scope>TISSUE SPECIFICITY</scope>
</reference>
<reference key="7">
    <citation type="journal article" date="2004" name="Plant Physiol.">
        <title>Roles for Class III HD-Zip and KANADI genes in Arabidopsis root development.</title>
        <authorList>
            <person name="Hawker N.P."/>
            <person name="Bowman J.L."/>
        </authorList>
    </citation>
    <scope>FUNCTION</scope>
</reference>
<reference key="8">
    <citation type="journal article" date="2006" name="Plant J.">
        <title>ABERRANT TESTA SHAPE encodes a KANADI family member, linking polarity determination to separation and growth of Arabidopsis ovule integuments.</title>
        <authorList>
            <person name="McAbee J.M."/>
            <person name="Hill T.A."/>
            <person name="Skinner D.J."/>
            <person name="Izhaki A."/>
            <person name="Hauser B.A."/>
            <person name="Meister R.J."/>
            <person name="Venugopala Reddy G."/>
            <person name="Meyerowitz E.M."/>
            <person name="Bowman J.L."/>
            <person name="Gasser C.S."/>
        </authorList>
    </citation>
    <scope>FUNCTION</scope>
</reference>
<reference key="9">
    <citation type="journal article" date="2007" name="Plant Cell">
        <title>KANADI and class III HD-Zip gene families regulate embryo patterning and modulate auxin flow during embryogenesis in Arabidopsis.</title>
        <authorList>
            <person name="Izhaki A."/>
            <person name="Bowman J.L."/>
        </authorList>
    </citation>
    <scope>FUNCTION</scope>
</reference>
<sequence length="388" mass="43841">MELFPAQPDLSLQISPPNSKPSSTWQRRRSTTDQEDHEELDLGFWRRALDSRTSSLVSNSTSKTINHPFQDLSLSNISHHQQQQQHHHPQLLPNCNSSNILTSFQFPTQQQQQHLQGFLAHDLNTHLRPIRGIPLYHNPPPHHHPHRPPPPCFPFDPSSLIPSSSTSSPALTGNNNSFNTSSVSNPNYHNHHHQTLNRARFMPRFPAKRSMRAPRMRWTTTLHARFVHAVELLGGHERATPKSVLELMDVKDLTLAHVKSHLQMYRTVKTTDKAAASSGQSDVYENGSSGDNNSDDWMFDMNRKSRDSEELTNPLEKSNGLWTNSSGEARLHGKLIDNVAEIMLPSEKELDGKCSSYERISSEEMSSSSISGTSPFKPNLEFTLGRSH</sequence>
<evidence type="ECO:0000250" key="1"/>
<evidence type="ECO:0000256" key="2">
    <source>
        <dbReference type="SAM" id="MobiDB-lite"/>
    </source>
</evidence>
<evidence type="ECO:0000269" key="3">
    <source>
    </source>
</evidence>
<evidence type="ECO:0000269" key="4">
    <source>
    </source>
</evidence>
<evidence type="ECO:0000269" key="5">
    <source>
    </source>
</evidence>
<evidence type="ECO:0000269" key="6">
    <source>
    </source>
</evidence>
<evidence type="ECO:0000269" key="7">
    <source>
    </source>
</evidence>
<evidence type="ECO:0000305" key="8"/>
<organism>
    <name type="scientific">Arabidopsis thaliana</name>
    <name type="common">Mouse-ear cress</name>
    <dbReference type="NCBI Taxonomy" id="3702"/>
    <lineage>
        <taxon>Eukaryota</taxon>
        <taxon>Viridiplantae</taxon>
        <taxon>Streptophyta</taxon>
        <taxon>Embryophyta</taxon>
        <taxon>Tracheophyta</taxon>
        <taxon>Spermatophyta</taxon>
        <taxon>Magnoliopsida</taxon>
        <taxon>eudicotyledons</taxon>
        <taxon>Gunneridae</taxon>
        <taxon>Pentapetalae</taxon>
        <taxon>rosids</taxon>
        <taxon>malvids</taxon>
        <taxon>Brassicales</taxon>
        <taxon>Brassicaceae</taxon>
        <taxon>Camelineae</taxon>
        <taxon>Arabidopsis</taxon>
    </lineage>
</organism>
<proteinExistence type="evidence at transcript level"/>
<protein>
    <recommendedName>
        <fullName>Probable transcription factor KAN2</fullName>
    </recommendedName>
    <alternativeName>
        <fullName>Protein KANADI 2</fullName>
    </alternativeName>
</protein>
<name>KAN2_ARATH</name>